<sequence length="123" mass="13696">MPPKTSGKAAKKAGKAQKNITKTDKKKKRKRKESYAIYIYKVLKQVHPDTGISSKAMSIMNSFVNDIFERIAAEASRLAHYNKRSTITSREIQTAVRLLLPGELAKHAVSEGTKAVTKYTSSK</sequence>
<evidence type="ECO:0000250" key="1"/>
<evidence type="ECO:0000250" key="2">
    <source>
        <dbReference type="UniProtKB" id="P02283"/>
    </source>
</evidence>
<evidence type="ECO:0000256" key="3">
    <source>
        <dbReference type="SAM" id="MobiDB-lite"/>
    </source>
</evidence>
<evidence type="ECO:0000305" key="4"/>
<dbReference type="EMBL" id="AB105180">
    <property type="protein sequence ID" value="BAD02426.1"/>
    <property type="molecule type" value="Genomic_DNA"/>
</dbReference>
<dbReference type="SMR" id="Q76FF3"/>
<dbReference type="GlyCosmos" id="Q76FF3">
    <property type="glycosylation" value="1 site, No reported glycans"/>
</dbReference>
<dbReference type="EnsemblMetazoa" id="XM_043785537.1">
    <property type="protein sequence ID" value="XP_043641472.1"/>
    <property type="gene ID" value="LOC122612129"/>
</dbReference>
<dbReference type="EnsemblMetazoa" id="XM_043785555.1">
    <property type="protein sequence ID" value="XP_043641490.1"/>
    <property type="gene ID" value="LOC122612139"/>
</dbReference>
<dbReference type="EnsemblMetazoa" id="XM_043786102.1">
    <property type="protein sequence ID" value="XP_043642037.1"/>
    <property type="gene ID" value="LOC122612459"/>
</dbReference>
<dbReference type="EnsemblMetazoa" id="XM_043786387.1">
    <property type="protein sequence ID" value="XP_043642322.1"/>
    <property type="gene ID" value="LOC122612641"/>
</dbReference>
<dbReference type="EnsemblMetazoa" id="XM_043789453.1">
    <property type="protein sequence ID" value="XP_043645388.1"/>
    <property type="gene ID" value="LOC122614795"/>
</dbReference>
<dbReference type="EnsemblMetazoa" id="XM_043789457.1">
    <property type="protein sequence ID" value="XP_043645392.1"/>
    <property type="gene ID" value="LOC122614799"/>
</dbReference>
<dbReference type="EnsemblMetazoa" id="XM_043789594.1">
    <property type="protein sequence ID" value="XP_043645529.1"/>
    <property type="gene ID" value="LOC122614884"/>
</dbReference>
<dbReference type="EnsemblMetazoa" id="XM_043789597.1">
    <property type="protein sequence ID" value="XP_043645532.1"/>
    <property type="gene ID" value="LOC122614887"/>
</dbReference>
<dbReference type="EnsemblMetazoa" id="XM_043789872.1">
    <property type="protein sequence ID" value="XP_043645807.1"/>
    <property type="gene ID" value="LOC122615039"/>
</dbReference>
<dbReference type="EnsemblMetazoa" id="XM_043805872.1">
    <property type="protein sequence ID" value="XP_043661807.1"/>
    <property type="gene ID" value="LOC122625825"/>
</dbReference>
<dbReference type="EnsemblMetazoa" id="XM_043805873.1">
    <property type="protein sequence ID" value="XP_043661808.1"/>
    <property type="gene ID" value="LOC122625826"/>
</dbReference>
<dbReference type="EnsemblMetazoa" id="XM_043805875.1">
    <property type="protein sequence ID" value="XP_043661810.1"/>
    <property type="gene ID" value="LOC122625827"/>
</dbReference>
<dbReference type="GO" id="GO:0000786">
    <property type="term" value="C:nucleosome"/>
    <property type="evidence" value="ECO:0007669"/>
    <property type="project" value="UniProtKB-KW"/>
</dbReference>
<dbReference type="GO" id="GO:0005634">
    <property type="term" value="C:nucleus"/>
    <property type="evidence" value="ECO:0007669"/>
    <property type="project" value="UniProtKB-SubCell"/>
</dbReference>
<dbReference type="GO" id="GO:0003677">
    <property type="term" value="F:DNA binding"/>
    <property type="evidence" value="ECO:0007669"/>
    <property type="project" value="UniProtKB-KW"/>
</dbReference>
<dbReference type="GO" id="GO:0046982">
    <property type="term" value="F:protein heterodimerization activity"/>
    <property type="evidence" value="ECO:0007669"/>
    <property type="project" value="InterPro"/>
</dbReference>
<dbReference type="GO" id="GO:0044877">
    <property type="term" value="F:protein-containing complex binding"/>
    <property type="evidence" value="ECO:0000250"/>
    <property type="project" value="UniProtKB"/>
</dbReference>
<dbReference type="GO" id="GO:0030527">
    <property type="term" value="F:structural constituent of chromatin"/>
    <property type="evidence" value="ECO:0007669"/>
    <property type="project" value="InterPro"/>
</dbReference>
<dbReference type="CDD" id="cd22910">
    <property type="entry name" value="HFD_H2B"/>
    <property type="match status" value="1"/>
</dbReference>
<dbReference type="FunFam" id="1.10.20.10:FF:000016">
    <property type="entry name" value="Histone H2B"/>
    <property type="match status" value="1"/>
</dbReference>
<dbReference type="Gene3D" id="1.10.20.10">
    <property type="entry name" value="Histone, subunit A"/>
    <property type="match status" value="1"/>
</dbReference>
<dbReference type="InterPro" id="IPR009072">
    <property type="entry name" value="Histone-fold"/>
</dbReference>
<dbReference type="InterPro" id="IPR007125">
    <property type="entry name" value="Histone_H2A/H2B/H3"/>
</dbReference>
<dbReference type="InterPro" id="IPR000558">
    <property type="entry name" value="Histone_H2B"/>
</dbReference>
<dbReference type="InterPro" id="IPR055333">
    <property type="entry name" value="HISTONE_H2B_site"/>
</dbReference>
<dbReference type="PANTHER" id="PTHR23428">
    <property type="entry name" value="HISTONE H2B"/>
    <property type="match status" value="1"/>
</dbReference>
<dbReference type="Pfam" id="PF00125">
    <property type="entry name" value="Histone"/>
    <property type="match status" value="1"/>
</dbReference>
<dbReference type="PRINTS" id="PR00621">
    <property type="entry name" value="HISTONEH2B"/>
</dbReference>
<dbReference type="SMART" id="SM00427">
    <property type="entry name" value="H2B"/>
    <property type="match status" value="1"/>
</dbReference>
<dbReference type="SUPFAM" id="SSF47113">
    <property type="entry name" value="Histone-fold"/>
    <property type="match status" value="1"/>
</dbReference>
<dbReference type="PROSITE" id="PS00357">
    <property type="entry name" value="HISTONE_H2B"/>
    <property type="match status" value="1"/>
</dbReference>
<feature type="initiator methionine" description="Removed" evidence="1">
    <location>
        <position position="1"/>
    </location>
</feature>
<feature type="chain" id="PRO_0000071865" description="Histone H2B">
    <location>
        <begin position="2"/>
        <end position="123"/>
    </location>
</feature>
<feature type="region of interest" description="Disordered" evidence="3">
    <location>
        <begin position="1"/>
        <end position="30"/>
    </location>
</feature>
<feature type="modified residue" description="N-methylproline; partial" evidence="2">
    <location>
        <position position="2"/>
    </location>
</feature>
<feature type="modified residue" description="N6-succinyllysine" evidence="2">
    <location>
        <position position="44"/>
    </location>
</feature>
<feature type="modified residue" description="N6-succinyllysine" evidence="2">
    <location>
        <position position="114"/>
    </location>
</feature>
<feature type="modified residue" description="N6-succinyllysine" evidence="2">
    <location>
        <position position="118"/>
    </location>
</feature>
<feature type="glycosylation site" description="O-linked (GlcNAc) serine" evidence="1">
    <location>
        <position position="110"/>
    </location>
</feature>
<feature type="cross-link" description="Glycyl lysine isopeptide (Lys-Gly) (interchain with G-Cter in ubiquitin)" evidence="2">
    <location>
        <position position="118"/>
    </location>
</feature>
<organism>
    <name type="scientific">Drosophila teissieri</name>
    <name type="common">Fruit fly</name>
    <dbReference type="NCBI Taxonomy" id="7243"/>
    <lineage>
        <taxon>Eukaryota</taxon>
        <taxon>Metazoa</taxon>
        <taxon>Ecdysozoa</taxon>
        <taxon>Arthropoda</taxon>
        <taxon>Hexapoda</taxon>
        <taxon>Insecta</taxon>
        <taxon>Pterygota</taxon>
        <taxon>Neoptera</taxon>
        <taxon>Endopterygota</taxon>
        <taxon>Diptera</taxon>
        <taxon>Brachycera</taxon>
        <taxon>Muscomorpha</taxon>
        <taxon>Ephydroidea</taxon>
        <taxon>Drosophilidae</taxon>
        <taxon>Drosophila</taxon>
        <taxon>Sophophora</taxon>
    </lineage>
</organism>
<keyword id="KW-0158">Chromosome</keyword>
<keyword id="KW-0238">DNA-binding</keyword>
<keyword id="KW-0325">Glycoprotein</keyword>
<keyword id="KW-1017">Isopeptide bond</keyword>
<keyword id="KW-0488">Methylation</keyword>
<keyword id="KW-0544">Nucleosome core</keyword>
<keyword id="KW-0539">Nucleus</keyword>
<keyword id="KW-0832">Ubl conjugation</keyword>
<reference key="1">
    <citation type="journal article" date="2003" name="Genes Genet. Syst.">
        <title>Divergence and heterogeneity of the histone gene repeating units in the Drosophila melanogaster species subgroup.</title>
        <authorList>
            <person name="Kakita M."/>
            <person name="Shimizu T."/>
            <person name="Emoto M."/>
            <person name="Nagai M."/>
            <person name="Takeguchi M."/>
            <person name="Hosono Y."/>
            <person name="Kume N."/>
            <person name="Ozawa T."/>
            <person name="Ueda M."/>
            <person name="Bhuiyan M.S."/>
            <person name="Matsuo Y."/>
        </authorList>
    </citation>
    <scope>NUCLEOTIDE SEQUENCE [GENOMIC DNA]</scope>
</reference>
<protein>
    <recommendedName>
        <fullName>Histone H2B</fullName>
    </recommendedName>
</protein>
<accession>Q76FF3</accession>
<name>H2B_DROTE</name>
<comment type="function">
    <text>Core component of nucleosome. Nucleosomes wrap and compact DNA into chromatin, limiting DNA accessibility to the cellular machineries which require DNA as a template. Histones thereby play a central role in transcription regulation, DNA repair, DNA replication and chromosomal stability. DNA accessibility is regulated via a complex set of post-translational modifications of histones, also called histone code, and nucleosome remodeling.</text>
</comment>
<comment type="subunit">
    <text>The nucleosome is a histone octamer containing two molecules each of H2A, H2B, H3 and H4 assembled in one H3-H4 heterotetramer and two H2A-H2B heterodimers. The octamer wraps approximately 147 bp of DNA.</text>
</comment>
<comment type="subcellular location">
    <subcellularLocation>
        <location>Nucleus</location>
    </subcellularLocation>
    <subcellularLocation>
        <location>Chromosome</location>
    </subcellularLocation>
</comment>
<comment type="PTM">
    <text evidence="2">Phosphorylated by the catalytic component of the Dbf4-dependent kinase (DDK) complex Cdc7.</text>
</comment>
<comment type="PTM">
    <text evidence="2">Monoubiquitination of Lys-118 by Bre1 gives a specific tag for epigenetic transcriptional activation and is also prerequisite for histone H3 'Lys-4' and 'Lys-79' methylation (By similarity). Deubiquitination of Lys-118 by the SAGA complex is involved in activating transcription of a large subset of genes (By similarity).</text>
</comment>
<comment type="PTM">
    <text evidence="2">Methylation at Pro-2 increases upon heat shock.</text>
</comment>
<comment type="PTM">
    <text evidence="2">GlcNAcylation at Ser-110 promotes monoubiquitination of Lys-118. It fluctuates in response to extracellular glucose, and associates with transcribed genes.</text>
</comment>
<comment type="similarity">
    <text evidence="4">Belongs to the histone H2B family.</text>
</comment>
<gene>
    <name type="primary">His2B</name>
</gene>
<proteinExistence type="inferred from homology"/>